<accession>Q0TCG2</accession>
<keyword id="KW-0687">Ribonucleoprotein</keyword>
<keyword id="KW-0689">Ribosomal protein</keyword>
<evidence type="ECO:0000255" key="1">
    <source>
        <dbReference type="HAMAP-Rule" id="MF_00251"/>
    </source>
</evidence>
<evidence type="ECO:0000305" key="2"/>
<reference key="1">
    <citation type="journal article" date="2006" name="Mol. Microbiol.">
        <title>Role of pathogenicity island-associated integrases in the genome plasticity of uropathogenic Escherichia coli strain 536.</title>
        <authorList>
            <person name="Hochhut B."/>
            <person name="Wilde C."/>
            <person name="Balling G."/>
            <person name="Middendorf B."/>
            <person name="Dobrindt U."/>
            <person name="Brzuszkiewicz E."/>
            <person name="Gottschalk G."/>
            <person name="Carniel E."/>
            <person name="Hacker J."/>
        </authorList>
    </citation>
    <scope>NUCLEOTIDE SEQUENCE [LARGE SCALE GENOMIC DNA]</scope>
    <source>
        <strain>536 / UPEC</strain>
    </source>
</reference>
<name>RL361_ECOL5</name>
<feature type="chain" id="PRO_0000344678" description="Large ribosomal subunit protein bL36A">
    <location>
        <begin position="1"/>
        <end position="38"/>
    </location>
</feature>
<comment type="similarity">
    <text evidence="1">Belongs to the bacterial ribosomal protein bL36 family.</text>
</comment>
<dbReference type="EMBL" id="CP000247">
    <property type="protein sequence ID" value="ABG71367.1"/>
    <property type="molecule type" value="Genomic_DNA"/>
</dbReference>
<dbReference type="SMR" id="Q0TCG2"/>
<dbReference type="KEGG" id="ecp:ECP_3387"/>
<dbReference type="HOGENOM" id="CLU_135723_6_2_6"/>
<dbReference type="Proteomes" id="UP000009182">
    <property type="component" value="Chromosome"/>
</dbReference>
<dbReference type="GO" id="GO:0005737">
    <property type="term" value="C:cytoplasm"/>
    <property type="evidence" value="ECO:0007669"/>
    <property type="project" value="UniProtKB-ARBA"/>
</dbReference>
<dbReference type="GO" id="GO:1990904">
    <property type="term" value="C:ribonucleoprotein complex"/>
    <property type="evidence" value="ECO:0007669"/>
    <property type="project" value="UniProtKB-KW"/>
</dbReference>
<dbReference type="GO" id="GO:0005840">
    <property type="term" value="C:ribosome"/>
    <property type="evidence" value="ECO:0007669"/>
    <property type="project" value="UniProtKB-KW"/>
</dbReference>
<dbReference type="GO" id="GO:0003735">
    <property type="term" value="F:structural constituent of ribosome"/>
    <property type="evidence" value="ECO:0007669"/>
    <property type="project" value="InterPro"/>
</dbReference>
<dbReference type="GO" id="GO:0006412">
    <property type="term" value="P:translation"/>
    <property type="evidence" value="ECO:0007669"/>
    <property type="project" value="UniProtKB-UniRule"/>
</dbReference>
<dbReference type="HAMAP" id="MF_00251">
    <property type="entry name" value="Ribosomal_bL36"/>
    <property type="match status" value="1"/>
</dbReference>
<dbReference type="InterPro" id="IPR000473">
    <property type="entry name" value="Ribosomal_bL36"/>
</dbReference>
<dbReference type="InterPro" id="IPR035977">
    <property type="entry name" value="Ribosomal_bL36_sp"/>
</dbReference>
<dbReference type="NCBIfam" id="TIGR01022">
    <property type="entry name" value="rpmJ_bact"/>
    <property type="match status" value="1"/>
</dbReference>
<dbReference type="PANTHER" id="PTHR42888">
    <property type="entry name" value="50S RIBOSOMAL PROTEIN L36, CHLOROPLASTIC"/>
    <property type="match status" value="1"/>
</dbReference>
<dbReference type="PANTHER" id="PTHR42888:SF1">
    <property type="entry name" value="LARGE RIBOSOMAL SUBUNIT PROTEIN BL36C"/>
    <property type="match status" value="1"/>
</dbReference>
<dbReference type="Pfam" id="PF00444">
    <property type="entry name" value="Ribosomal_L36"/>
    <property type="match status" value="1"/>
</dbReference>
<dbReference type="SUPFAM" id="SSF57840">
    <property type="entry name" value="Ribosomal protein L36"/>
    <property type="match status" value="1"/>
</dbReference>
<dbReference type="PROSITE" id="PS00828">
    <property type="entry name" value="RIBOSOMAL_L36"/>
    <property type="match status" value="1"/>
</dbReference>
<proteinExistence type="inferred from homology"/>
<protein>
    <recommendedName>
        <fullName evidence="1">Large ribosomal subunit protein bL36A</fullName>
    </recommendedName>
    <alternativeName>
        <fullName evidence="2">50S ribosomal protein L36 1</fullName>
    </alternativeName>
</protein>
<organism>
    <name type="scientific">Escherichia coli O6:K15:H31 (strain 536 / UPEC)</name>
    <dbReference type="NCBI Taxonomy" id="362663"/>
    <lineage>
        <taxon>Bacteria</taxon>
        <taxon>Pseudomonadati</taxon>
        <taxon>Pseudomonadota</taxon>
        <taxon>Gammaproteobacteria</taxon>
        <taxon>Enterobacterales</taxon>
        <taxon>Enterobacteriaceae</taxon>
        <taxon>Escherichia</taxon>
    </lineage>
</organism>
<gene>
    <name evidence="1" type="primary">rpmJ1</name>
    <name type="ordered locus">ECP_3387</name>
</gene>
<sequence length="38" mass="4364">MKVRASVKKLCRNCKIVKRDGVIRVICSAEPKHKQRQG</sequence>